<feature type="chain" id="PRO_0000446010" description="Primer-independent DNA polymerase PolB">
    <location>
        <begin position="1"/>
        <end position="866"/>
    </location>
</feature>
<feature type="region of interest" description="Exonuclease domain" evidence="4">
    <location>
        <begin position="50"/>
        <end position="286"/>
    </location>
</feature>
<feature type="region of interest" description="Palm1 domain" evidence="4">
    <location>
        <begin position="287"/>
        <end position="385"/>
    </location>
</feature>
<feature type="region of interest" description="TPR1 domain" evidence="4">
    <location>
        <begin position="386"/>
        <end position="481"/>
    </location>
</feature>
<feature type="region of interest" description="Fingers domain" evidence="4">
    <location>
        <begin position="482"/>
        <end position="522"/>
    </location>
</feature>
<feature type="region of interest" description="TPR2 domain" evidence="4">
    <location>
        <begin position="523"/>
        <end position="549"/>
    </location>
</feature>
<feature type="region of interest" description="Palm2 domain" evidence="4">
    <location>
        <begin position="550"/>
        <end position="678"/>
    </location>
</feature>
<feature type="region of interest" description="Thumb domain" evidence="4">
    <location>
        <begin position="679"/>
        <end position="866"/>
    </location>
</feature>
<feature type="mutagenesis site" description="Decreased 3'-5' exonuclease activity." evidence="1">
    <original>DTE</original>
    <variation>ATA</variation>
    <location>
        <begin position="59"/>
        <end position="61"/>
    </location>
</feature>
<feature type="mutagenesis site" description="No primer-dependent or primer-independent DNA polymerization, loss of translesion DNA synthesis." evidence="1">
    <original>D</original>
    <variation>A</variation>
    <location>
        <position position="368"/>
    </location>
</feature>
<feature type="mutagenesis site" description="Strongly reduced primer synthesis, loss of translesion DNA synthesis, normal polymerase activity." evidence="1">
    <original>K</original>
    <variation>A</variation>
    <location>
        <position position="613"/>
    </location>
</feature>
<feature type="mutagenesis site" description="Normal primer synthesis and polymerase activity." evidence="1">
    <original>H</original>
    <variation>A</variation>
    <location>
        <position position="614"/>
    </location>
</feature>
<feature type="mutagenesis site" description="No primer synthesis, impaired polymerase activity." evidence="1">
    <original>K</original>
    <variation>A</variation>
    <location>
        <position position="623"/>
    </location>
</feature>
<feature type="mutagenesis site" description="No primer synthesis, impaired polymerase activity." evidence="1">
    <original>R</original>
    <variation>A</variation>
    <location>
        <position position="625"/>
    </location>
</feature>
<name>PIPOL_ECOLX</name>
<organism>
    <name type="scientific">Escherichia coli</name>
    <dbReference type="NCBI Taxonomy" id="562"/>
    <lineage>
        <taxon>Bacteria</taxon>
        <taxon>Pseudomonadati</taxon>
        <taxon>Pseudomonadota</taxon>
        <taxon>Gammaproteobacteria</taxon>
        <taxon>Enterobacterales</taxon>
        <taxon>Enterobacteriaceae</taxon>
        <taxon>Escherichia</taxon>
    </lineage>
</organism>
<evidence type="ECO:0000269" key="1">
    <source>
    </source>
</evidence>
<evidence type="ECO:0000303" key="2">
    <source>
    </source>
</evidence>
<evidence type="ECO:0000305" key="3"/>
<evidence type="ECO:0000305" key="4">
    <source>
    </source>
</evidence>
<reference key="1">
    <citation type="submission" date="2014-05" db="EMBL/GenBank/DDBJ databases">
        <title>Genetic variability of E. coli after antibiotic treatment.</title>
        <authorList>
            <person name="Silbergeld E."/>
            <person name="Coles C."/>
            <person name="Seidman J.C."/>
            <person name="You Y."/>
            <person name="George J."/>
            <person name="Nadendla S."/>
            <person name="Daugherty S.C."/>
            <person name="Nagaraj S."/>
            <person name="Ott S."/>
            <person name="Klega K."/>
            <person name="Rasko D."/>
        </authorList>
    </citation>
    <scope>NUCLEOTIDE SEQUENCE [LARGE SCALE GENOMIC DNA]</scope>
    <source>
        <strain>3-373-03_S1_C2</strain>
    </source>
</reference>
<reference key="2">
    <citation type="journal article" date="2017" name="Cell Rep.">
        <title>Primer-independent DNA synthesis by a family B DNA polymerase from self-replicating mobile genetic elements.</title>
        <authorList>
            <person name="Redrejo-Rodriguez M."/>
            <person name="Ordonez C.D."/>
            <person name="Berjon-Otero M."/>
            <person name="Moreno-Gonzalez J."/>
            <person name="Aparicio-Maldonado C."/>
            <person name="Forterre P."/>
            <person name="Salas M."/>
            <person name="Krupovic M."/>
        </authorList>
    </citation>
    <scope>FUNCTION</scope>
    <scope>CATALYTIC ACTIVITY</scope>
    <scope>COFACTOR</scope>
    <scope>DOMAIN</scope>
    <scope>MUTAGENESIS OF 59-ASP--GLU-61; ASP-368; LYS-613; HIS-614; LYS-623 AND ARG-625</scope>
    <source>
        <strain>3-373-03_S1_C2</strain>
    </source>
</reference>
<proteinExistence type="evidence at protein level"/>
<accession>P0DPS1</accession>
<keyword id="KW-0227">DNA damage</keyword>
<keyword id="KW-0234">DNA repair</keyword>
<keyword id="KW-0235">DNA replication</keyword>
<keyword id="KW-0238">DNA-binding</keyword>
<keyword id="KW-0239">DNA-directed DNA polymerase</keyword>
<keyword id="KW-0269">Exonuclease</keyword>
<keyword id="KW-0378">Hydrolase</keyword>
<keyword id="KW-0460">Magnesium</keyword>
<keyword id="KW-0464">Manganese</keyword>
<keyword id="KW-0540">Nuclease</keyword>
<keyword id="KW-0548">Nucleotidyltransferase</keyword>
<keyword id="KW-0808">Transferase</keyword>
<sequence length="866" mass="97845">MSNNLQDILAAASGYQSVTSEPALNRKRPKTLDDYPVIPPASKKVSVISSDLTLHIGFDTEYVFNPETRQNDILSYQSYVVLPDNTGISNIIYPPDSQKKSRLSFKDFLCQTITPLLETGVITKWPGIINIYAHFIRADIASFANFWSDYKILLKGIRGTVSSFKNRYGIDFDEQQERRVKTEQIMFDKRTSPPRCSNVAFIDTLLITPGGMGLAECGELLGLPKLTIPAPYSITNMREYLLGDRAGFEAYALRDAEIAVRYALQVRNFCARELMIDRVPATIGAMAVSRFTKTLKENNMSPEVCLGTHIKTRELWLTEKQAFRTIKNPASVPSRELFETFPINCYHGGRNECFMMGVTPSDHWYDYDLAGAYTTGLLDILTPDYGNIRLSKNPDDYCGHVMGFALVTFRFPESVPYPSLPVRTDQYGLFFPLSGESWATAPEIELALSLGAEMTIHNGIIVPWICDTSPHNSESTSVFLPFVQQVRENRNRHIKGSLEEKFWKEIGNSLYGKLAQGLRAKTAFDTARGLNRSLPPSSVTQPFFAAHVTGFIRAVVGELMNALPSDSSVVSVTTDGFLTNCPLDKINMSGPLSSRFQSLCDIVDPGSSMLTCKHEVSQLIAMKTRGQLTYKAIQGKPVVHARAGVKPPADIPRSDYNDYMVDLYLNRLPGQTLSRSTLISTREMWLSESDLVSREQDIRLNLEFDFKRQPVRPAMNEGHLLMFSRPWDNMEEALQQRSLFDDWRQTHTLKTLADWDDWCDFLYCRTVFSDMKLKVGSKRSDDILVRLFLRALTQCQWGLMLKDKKSYSCKEVAEWLTSEGYSVTVTDVKNAVRAKIPQMKFSSVTPRMKSLMDIIARKYPTFCLPV</sequence>
<dbReference type="EC" id="2.7.7.-" evidence="1"/>
<dbReference type="EC" id="3.1.11.-" evidence="1"/>
<dbReference type="EC" id="2.7.7.7" evidence="1"/>
<dbReference type="EMBL" id="JNMI01000006">
    <property type="protein sequence ID" value="KDT81534.1"/>
    <property type="molecule type" value="Genomic_DNA"/>
</dbReference>
<dbReference type="RefSeq" id="WP_032253499.1">
    <property type="nucleotide sequence ID" value="NZ_RJCI01000014.1"/>
</dbReference>
<dbReference type="GO" id="GO:0003677">
    <property type="term" value="F:DNA binding"/>
    <property type="evidence" value="ECO:0007669"/>
    <property type="project" value="UniProtKB-KW"/>
</dbReference>
<dbReference type="GO" id="GO:0003887">
    <property type="term" value="F:DNA-directed DNA polymerase activity"/>
    <property type="evidence" value="ECO:0007669"/>
    <property type="project" value="UniProtKB-KW"/>
</dbReference>
<dbReference type="GO" id="GO:0004527">
    <property type="term" value="F:exonuclease activity"/>
    <property type="evidence" value="ECO:0007669"/>
    <property type="project" value="UniProtKB-KW"/>
</dbReference>
<dbReference type="GO" id="GO:0006281">
    <property type="term" value="P:DNA repair"/>
    <property type="evidence" value="ECO:0007669"/>
    <property type="project" value="UniProtKB-KW"/>
</dbReference>
<dbReference type="GO" id="GO:0006260">
    <property type="term" value="P:DNA replication"/>
    <property type="evidence" value="ECO:0007669"/>
    <property type="project" value="UniProtKB-KW"/>
</dbReference>
<dbReference type="InterPro" id="IPR043502">
    <property type="entry name" value="DNA/RNA_pol_sf"/>
</dbReference>
<dbReference type="SUPFAM" id="SSF56672">
    <property type="entry name" value="DNA/RNA polymerases"/>
    <property type="match status" value="1"/>
</dbReference>
<comment type="function">
    <text evidence="1">DNA polymerase with primer-independent templated DNA polymerization activity, primer-dependent DNA polymerization activity with strand displacement, translesion synthesis activity across non-bulky base damage, 3'-5' exodeoxyribonuclease activity, and de novo primer synthesis activity. The enzyme is processive and faithful. Translation synthesis across abasic sites is coupled to de novo primer synthesis. Overexpression of wild-type protein increases survival of cells upon mitomycin C or UV treatment.</text>
</comment>
<comment type="catalytic activity">
    <reaction evidence="1">
        <text>DNA(n) + a 2'-deoxyribonucleoside 5'-triphosphate = DNA(n+1) + diphosphate</text>
        <dbReference type="Rhea" id="RHEA:22508"/>
        <dbReference type="Rhea" id="RHEA-COMP:17339"/>
        <dbReference type="Rhea" id="RHEA-COMP:17340"/>
        <dbReference type="ChEBI" id="CHEBI:33019"/>
        <dbReference type="ChEBI" id="CHEBI:61560"/>
        <dbReference type="ChEBI" id="CHEBI:173112"/>
        <dbReference type="EC" id="2.7.7.7"/>
    </reaction>
</comment>
<comment type="cofactor">
    <cofactor evidence="1">
        <name>Mn(2+)</name>
        <dbReference type="ChEBI" id="CHEBI:29035"/>
    </cofactor>
    <text evidence="1">Translesion synthesis across abasic sites is more efficient with Mn(2+) compared to Mg(2+), replication of undamaged template is more efficient with Mg(2+).</text>
</comment>
<comment type="miscellaneous">
    <text evidence="2">Encoded in a mobile genetic element called pipolin.</text>
</comment>
<gene>
    <name type="primary">pi-polB</name>
    <name type="ORF">AB47_1109</name>
</gene>
<protein>
    <recommendedName>
        <fullName evidence="2">Primer-independent DNA polymerase PolB</fullName>
        <shortName evidence="2">piPolB</shortName>
        <ecNumber evidence="1">2.7.7.-</ecNumber>
        <ecNumber evidence="1">3.1.11.-</ecNumber>
    </recommendedName>
    <alternativeName>
        <fullName evidence="3">Primer-dependent DNA polymerase PolB</fullName>
        <ecNumber evidence="1">2.7.7.7</ecNumber>
    </alternativeName>
</protein>